<gene>
    <name evidence="1" type="primary">gcvH</name>
    <name type="ordered locus">ECUMN_3245</name>
</gene>
<sequence>MSNVPAELKYSKEHEWLRKEADGTYTVGITEHAQELLGDMVFVDLPEVGATVSAGDDCAVAESVKAASDIYAPVSGEIVAVNDALSDSPELVNSEPYAGGWIFKIKASDESELESLLDATAYEALLEDE</sequence>
<accession>B7N7E7</accession>
<protein>
    <recommendedName>
        <fullName evidence="1">Glycine cleavage system H protein</fullName>
    </recommendedName>
</protein>
<organism>
    <name type="scientific">Escherichia coli O17:K52:H18 (strain UMN026 / ExPEC)</name>
    <dbReference type="NCBI Taxonomy" id="585056"/>
    <lineage>
        <taxon>Bacteria</taxon>
        <taxon>Pseudomonadati</taxon>
        <taxon>Pseudomonadota</taxon>
        <taxon>Gammaproteobacteria</taxon>
        <taxon>Enterobacterales</taxon>
        <taxon>Enterobacteriaceae</taxon>
        <taxon>Escherichia</taxon>
    </lineage>
</organism>
<proteinExistence type="inferred from homology"/>
<comment type="function">
    <text evidence="1">The glycine cleavage system catalyzes the degradation of glycine. The H protein shuttles the methylamine group of glycine from the P protein to the T protein.</text>
</comment>
<comment type="cofactor">
    <cofactor evidence="1">
        <name>(R)-lipoate</name>
        <dbReference type="ChEBI" id="CHEBI:83088"/>
    </cofactor>
    <text evidence="1">Binds 1 lipoyl cofactor covalently.</text>
</comment>
<comment type="subunit">
    <text evidence="1">The glycine cleavage system is composed of four proteins: P, T, L and H.</text>
</comment>
<comment type="similarity">
    <text evidence="1">Belongs to the GcvH family.</text>
</comment>
<reference key="1">
    <citation type="journal article" date="2009" name="PLoS Genet.">
        <title>Organised genome dynamics in the Escherichia coli species results in highly diverse adaptive paths.</title>
        <authorList>
            <person name="Touchon M."/>
            <person name="Hoede C."/>
            <person name="Tenaillon O."/>
            <person name="Barbe V."/>
            <person name="Baeriswyl S."/>
            <person name="Bidet P."/>
            <person name="Bingen E."/>
            <person name="Bonacorsi S."/>
            <person name="Bouchier C."/>
            <person name="Bouvet O."/>
            <person name="Calteau A."/>
            <person name="Chiapello H."/>
            <person name="Clermont O."/>
            <person name="Cruveiller S."/>
            <person name="Danchin A."/>
            <person name="Diard M."/>
            <person name="Dossat C."/>
            <person name="Karoui M.E."/>
            <person name="Frapy E."/>
            <person name="Garry L."/>
            <person name="Ghigo J.M."/>
            <person name="Gilles A.M."/>
            <person name="Johnson J."/>
            <person name="Le Bouguenec C."/>
            <person name="Lescat M."/>
            <person name="Mangenot S."/>
            <person name="Martinez-Jehanne V."/>
            <person name="Matic I."/>
            <person name="Nassif X."/>
            <person name="Oztas S."/>
            <person name="Petit M.A."/>
            <person name="Pichon C."/>
            <person name="Rouy Z."/>
            <person name="Ruf C.S."/>
            <person name="Schneider D."/>
            <person name="Tourret J."/>
            <person name="Vacherie B."/>
            <person name="Vallenet D."/>
            <person name="Medigue C."/>
            <person name="Rocha E.P.C."/>
            <person name="Denamur E."/>
        </authorList>
    </citation>
    <scope>NUCLEOTIDE SEQUENCE [LARGE SCALE GENOMIC DNA]</scope>
    <source>
        <strain>UMN026 / ExPEC</strain>
    </source>
</reference>
<evidence type="ECO:0000255" key="1">
    <source>
        <dbReference type="HAMAP-Rule" id="MF_00272"/>
    </source>
</evidence>
<evidence type="ECO:0000255" key="2">
    <source>
        <dbReference type="PROSITE-ProRule" id="PRU01066"/>
    </source>
</evidence>
<name>GCSH_ECOLU</name>
<feature type="chain" id="PRO_1000119301" description="Glycine cleavage system H protein">
    <location>
        <begin position="1"/>
        <end position="129"/>
    </location>
</feature>
<feature type="domain" description="Lipoyl-binding" evidence="2">
    <location>
        <begin position="24"/>
        <end position="106"/>
    </location>
</feature>
<feature type="modified residue" description="N6-lipoyllysine" evidence="1">
    <location>
        <position position="65"/>
    </location>
</feature>
<dbReference type="EMBL" id="CU928163">
    <property type="protein sequence ID" value="CAR14409.1"/>
    <property type="molecule type" value="Genomic_DNA"/>
</dbReference>
<dbReference type="RefSeq" id="WP_001295377.1">
    <property type="nucleotide sequence ID" value="NC_011751.1"/>
</dbReference>
<dbReference type="RefSeq" id="YP_002413928.1">
    <property type="nucleotide sequence ID" value="NC_011751.1"/>
</dbReference>
<dbReference type="SMR" id="B7N7E7"/>
<dbReference type="STRING" id="585056.ECUMN_3245"/>
<dbReference type="GeneID" id="93779098"/>
<dbReference type="KEGG" id="eum:ECUMN_3245"/>
<dbReference type="PATRIC" id="fig|585056.7.peg.3422"/>
<dbReference type="HOGENOM" id="CLU_097408_2_1_6"/>
<dbReference type="Proteomes" id="UP000007097">
    <property type="component" value="Chromosome"/>
</dbReference>
<dbReference type="GO" id="GO:0005829">
    <property type="term" value="C:cytosol"/>
    <property type="evidence" value="ECO:0007669"/>
    <property type="project" value="TreeGrafter"/>
</dbReference>
<dbReference type="GO" id="GO:0005960">
    <property type="term" value="C:glycine cleavage complex"/>
    <property type="evidence" value="ECO:0007669"/>
    <property type="project" value="InterPro"/>
</dbReference>
<dbReference type="GO" id="GO:0019464">
    <property type="term" value="P:glycine decarboxylation via glycine cleavage system"/>
    <property type="evidence" value="ECO:0007669"/>
    <property type="project" value="UniProtKB-UniRule"/>
</dbReference>
<dbReference type="CDD" id="cd06848">
    <property type="entry name" value="GCS_H"/>
    <property type="match status" value="1"/>
</dbReference>
<dbReference type="FunFam" id="2.40.50.100:FF:000011">
    <property type="entry name" value="Glycine cleavage system H protein"/>
    <property type="match status" value="1"/>
</dbReference>
<dbReference type="Gene3D" id="2.40.50.100">
    <property type="match status" value="1"/>
</dbReference>
<dbReference type="HAMAP" id="MF_00272">
    <property type="entry name" value="GcvH"/>
    <property type="match status" value="1"/>
</dbReference>
<dbReference type="InterPro" id="IPR003016">
    <property type="entry name" value="2-oxoA_DH_lipoyl-BS"/>
</dbReference>
<dbReference type="InterPro" id="IPR000089">
    <property type="entry name" value="Biotin_lipoyl"/>
</dbReference>
<dbReference type="InterPro" id="IPR002930">
    <property type="entry name" value="GCV_H"/>
</dbReference>
<dbReference type="InterPro" id="IPR033753">
    <property type="entry name" value="GCV_H/Fam206"/>
</dbReference>
<dbReference type="InterPro" id="IPR017453">
    <property type="entry name" value="GCV_H_sub"/>
</dbReference>
<dbReference type="InterPro" id="IPR011053">
    <property type="entry name" value="Single_hybrid_motif"/>
</dbReference>
<dbReference type="NCBIfam" id="TIGR00527">
    <property type="entry name" value="gcvH"/>
    <property type="match status" value="1"/>
</dbReference>
<dbReference type="NCBIfam" id="NF002270">
    <property type="entry name" value="PRK01202.1"/>
    <property type="match status" value="1"/>
</dbReference>
<dbReference type="PANTHER" id="PTHR11715">
    <property type="entry name" value="GLYCINE CLEAVAGE SYSTEM H PROTEIN"/>
    <property type="match status" value="1"/>
</dbReference>
<dbReference type="PANTHER" id="PTHR11715:SF3">
    <property type="entry name" value="GLYCINE CLEAVAGE SYSTEM H PROTEIN-RELATED"/>
    <property type="match status" value="1"/>
</dbReference>
<dbReference type="Pfam" id="PF01597">
    <property type="entry name" value="GCV_H"/>
    <property type="match status" value="1"/>
</dbReference>
<dbReference type="SUPFAM" id="SSF51230">
    <property type="entry name" value="Single hybrid motif"/>
    <property type="match status" value="1"/>
</dbReference>
<dbReference type="PROSITE" id="PS50968">
    <property type="entry name" value="BIOTINYL_LIPOYL"/>
    <property type="match status" value="1"/>
</dbReference>
<dbReference type="PROSITE" id="PS00189">
    <property type="entry name" value="LIPOYL"/>
    <property type="match status" value="1"/>
</dbReference>
<keyword id="KW-0450">Lipoyl</keyword>